<geneLocation type="chloroplast"/>
<gene>
    <name evidence="1" type="primary">psbE</name>
</gene>
<proteinExistence type="inferred from homology"/>
<keyword id="KW-0150">Chloroplast</keyword>
<keyword id="KW-0249">Electron transport</keyword>
<keyword id="KW-0349">Heme</keyword>
<keyword id="KW-0408">Iron</keyword>
<keyword id="KW-0472">Membrane</keyword>
<keyword id="KW-0479">Metal-binding</keyword>
<keyword id="KW-0602">Photosynthesis</keyword>
<keyword id="KW-0604">Photosystem II</keyword>
<keyword id="KW-0934">Plastid</keyword>
<keyword id="KW-0793">Thylakoid</keyword>
<keyword id="KW-0812">Transmembrane</keyword>
<keyword id="KW-1133">Transmembrane helix</keyword>
<keyword id="KW-0813">Transport</keyword>
<accession>P41615</accession>
<comment type="function">
    <text evidence="1">This b-type cytochrome is tightly associated with the reaction center of photosystem II (PSII). PSII is a light-driven water:plastoquinone oxidoreductase that uses light energy to abstract electrons from H(2)O, generating O(2) and a proton gradient subsequently used for ATP formation. It consists of a core antenna complex that captures photons, and an electron transfer chain that converts photonic excitation into a charge separation.</text>
</comment>
<comment type="cofactor">
    <cofactor evidence="1">
        <name>heme b</name>
        <dbReference type="ChEBI" id="CHEBI:60344"/>
    </cofactor>
    <text evidence="1">With its partner (PsbF) binds heme. PSII binds additional chlorophylls, carotenoids and specific lipids.</text>
</comment>
<comment type="subunit">
    <text evidence="1">Heterodimer of an alpha subunit and a beta subunit. PSII is composed of 1 copy each of membrane proteins PsbA, PsbB, PsbC, PsbD, PsbE, PsbF, PsbH, PsbI, PsbJ, PsbK, PsbL, PsbM, PsbT, PsbX, PsbY, PsbZ, Psb30/Ycf12, at least 3 peripheral proteins of the oxygen-evolving complex and a large number of cofactors. It forms dimeric complexes.</text>
</comment>
<comment type="subcellular location">
    <subcellularLocation>
        <location evidence="1">Plastid</location>
        <location evidence="1">Chloroplast thylakoid membrane</location>
        <topology evidence="1">Single-pass membrane protein</topology>
    </subcellularLocation>
</comment>
<comment type="similarity">
    <text evidence="1">Belongs to the PsbE/PsbF family.</text>
</comment>
<dbReference type="EMBL" id="D17510">
    <property type="protein sequence ID" value="BAA04353.1"/>
    <property type="molecule type" value="Genomic_DNA"/>
</dbReference>
<dbReference type="PIR" id="T07475">
    <property type="entry name" value="T07475"/>
</dbReference>
<dbReference type="RefSeq" id="NP_042396.1">
    <property type="nucleotide sequence ID" value="NC_001631.1"/>
</dbReference>
<dbReference type="SMR" id="P41615"/>
<dbReference type="GeneID" id="809007"/>
<dbReference type="GO" id="GO:0009535">
    <property type="term" value="C:chloroplast thylakoid membrane"/>
    <property type="evidence" value="ECO:0007669"/>
    <property type="project" value="UniProtKB-SubCell"/>
</dbReference>
<dbReference type="GO" id="GO:0009539">
    <property type="term" value="C:photosystem II reaction center"/>
    <property type="evidence" value="ECO:0007669"/>
    <property type="project" value="InterPro"/>
</dbReference>
<dbReference type="GO" id="GO:0009055">
    <property type="term" value="F:electron transfer activity"/>
    <property type="evidence" value="ECO:0007669"/>
    <property type="project" value="UniProtKB-UniRule"/>
</dbReference>
<dbReference type="GO" id="GO:0020037">
    <property type="term" value="F:heme binding"/>
    <property type="evidence" value="ECO:0007669"/>
    <property type="project" value="InterPro"/>
</dbReference>
<dbReference type="GO" id="GO:0005506">
    <property type="term" value="F:iron ion binding"/>
    <property type="evidence" value="ECO:0007669"/>
    <property type="project" value="UniProtKB-UniRule"/>
</dbReference>
<dbReference type="GO" id="GO:0009767">
    <property type="term" value="P:photosynthetic electron transport chain"/>
    <property type="evidence" value="ECO:0007669"/>
    <property type="project" value="InterPro"/>
</dbReference>
<dbReference type="Gene3D" id="1.20.5.860">
    <property type="entry name" value="Photosystem II cytochrome b559, alpha subunit"/>
    <property type="match status" value="1"/>
</dbReference>
<dbReference type="HAMAP" id="MF_00642">
    <property type="entry name" value="PSII_PsbE"/>
    <property type="match status" value="1"/>
</dbReference>
<dbReference type="InterPro" id="IPR006217">
    <property type="entry name" value="PSII_cyt_b559_asu"/>
</dbReference>
<dbReference type="InterPro" id="IPR037025">
    <property type="entry name" value="PSII_cyt_b559_asu_sf"/>
</dbReference>
<dbReference type="InterPro" id="IPR006216">
    <property type="entry name" value="PSII_cyt_b559_CS"/>
</dbReference>
<dbReference type="InterPro" id="IPR013081">
    <property type="entry name" value="PSII_cyt_b559_N"/>
</dbReference>
<dbReference type="InterPro" id="IPR013082">
    <property type="entry name" value="PSII_cytb559_asu_lum"/>
</dbReference>
<dbReference type="NCBIfam" id="TIGR01332">
    <property type="entry name" value="cyt_b559_alpha"/>
    <property type="match status" value="1"/>
</dbReference>
<dbReference type="PANTHER" id="PTHR33391">
    <property type="entry name" value="CYTOCHROME B559 SUBUNIT BETA-RELATED"/>
    <property type="match status" value="1"/>
</dbReference>
<dbReference type="PANTHER" id="PTHR33391:SF9">
    <property type="entry name" value="CYTOCHROME B559 SUBUNIT BETA-RELATED"/>
    <property type="match status" value="1"/>
</dbReference>
<dbReference type="Pfam" id="PF00283">
    <property type="entry name" value="Cytochrom_B559"/>
    <property type="match status" value="1"/>
</dbReference>
<dbReference type="Pfam" id="PF00284">
    <property type="entry name" value="Cytochrom_B559a"/>
    <property type="match status" value="1"/>
</dbReference>
<dbReference type="PIRSF" id="PIRSF000036">
    <property type="entry name" value="PsbE"/>
    <property type="match status" value="1"/>
</dbReference>
<dbReference type="SUPFAM" id="SSF161045">
    <property type="entry name" value="Cytochrome b559 subunits"/>
    <property type="match status" value="1"/>
</dbReference>
<dbReference type="PROSITE" id="PS00537">
    <property type="entry name" value="CYTOCHROME_B559"/>
    <property type="match status" value="1"/>
</dbReference>
<protein>
    <recommendedName>
        <fullName evidence="1">Cytochrome b559 subunit alpha</fullName>
    </recommendedName>
    <alternativeName>
        <fullName evidence="1">PSII reaction center subunit V</fullName>
    </alternativeName>
</protein>
<reference key="1">
    <citation type="journal article" date="1994" name="Proc. Natl. Acad. Sci. U.S.A.">
        <title>Loss of all ndh genes as determined by sequencing the entire chloroplast genome of the black pine Pinus thunbergii.</title>
        <authorList>
            <person name="Wakasugi T."/>
            <person name="Tsudzuki J."/>
            <person name="Ito S."/>
            <person name="Nakashima K."/>
            <person name="Tsudzuki T."/>
            <person name="Sugiura M."/>
        </authorList>
    </citation>
    <scope>NUCLEOTIDE SEQUENCE [LARGE SCALE GENOMIC DNA]</scope>
</reference>
<evidence type="ECO:0000255" key="1">
    <source>
        <dbReference type="HAMAP-Rule" id="MF_00642"/>
    </source>
</evidence>
<organism>
    <name type="scientific">Pinus thunbergii</name>
    <name type="common">Japanese black pine</name>
    <name type="synonym">Pinus thunbergiana</name>
    <dbReference type="NCBI Taxonomy" id="3350"/>
    <lineage>
        <taxon>Eukaryota</taxon>
        <taxon>Viridiplantae</taxon>
        <taxon>Streptophyta</taxon>
        <taxon>Embryophyta</taxon>
        <taxon>Tracheophyta</taxon>
        <taxon>Spermatophyta</taxon>
        <taxon>Pinopsida</taxon>
        <taxon>Pinidae</taxon>
        <taxon>Conifers I</taxon>
        <taxon>Pinales</taxon>
        <taxon>Pinaceae</taxon>
        <taxon>Pinus</taxon>
        <taxon>Pinus subgen. Pinus</taxon>
    </lineage>
</organism>
<feature type="chain" id="PRO_0000200332" description="Cytochrome b559 subunit alpha">
    <location>
        <begin position="1"/>
        <end position="83"/>
    </location>
</feature>
<feature type="transmembrane region" description="Helical" evidence="1">
    <location>
        <begin position="21"/>
        <end position="35"/>
    </location>
</feature>
<feature type="binding site" description="axial binding residue" evidence="1">
    <location>
        <position position="23"/>
    </location>
    <ligand>
        <name>heme</name>
        <dbReference type="ChEBI" id="CHEBI:30413"/>
        <note>ligand shared with beta subunit</note>
    </ligand>
    <ligandPart>
        <name>Fe</name>
        <dbReference type="ChEBI" id="CHEBI:18248"/>
    </ligandPart>
</feature>
<name>PSBE_PINTH</name>
<sequence length="83" mass="9482">MSGNTGERSFADIITSIRYWVIHSITIPSLFIAGWLFVSTGLAYDVFGSPRPNEYFTESRQEVPLVTGRFDPLEQLDEFTRSF</sequence>